<keyword id="KW-0134">Cell wall</keyword>
<keyword id="KW-0325">Glycoprotein</keyword>
<keyword id="KW-0336">GPI-anchor</keyword>
<keyword id="KW-0449">Lipoprotein</keyword>
<keyword id="KW-0472">Membrane</keyword>
<keyword id="KW-1185">Reference proteome</keyword>
<keyword id="KW-0964">Secreted</keyword>
<keyword id="KW-0732">Signal</keyword>
<keyword id="KW-0843">Virulence</keyword>
<sequence length="941" mass="98731">MQLFQNILVSIALLTQVVFAIEITENKVDRGTVTLNLSDITIYPGASWSIIDNAYTSFVGKLDVRDGAGLYISSTSHLLALQVSLTALLHSITNNGVVSFDSRISRTSSSYDLRGVSFTNNGEMYFAASGEFSSSTALTSASWTNTRLLSFYQNQRTSGTVSLGMPLGSITNNGQVCLNNQVYEQTTQIKGSGCFTANGDSTIYISNVLLAVSPKQNFYLTDKGSSMIVQAVSTTQTFNVYGFGEGNKIGLTIPLMGNLWNSAYAYDTTSGILTLRNLLLEQKFNIGTGYDPSKFQVVTDSGSGIPSTILGSVAYYGRVPERTLPKSCQIPCKPIPEAPGTTPTQYTTTITKTNTAGNTVTESGVVNVSTDKGGSWFTTTSMFPALSTAPSTATVFSSDTIMSTVEPDTTELASLTDIPIETSSVEELLSVMSNWEPSSAPTLSIETPVSSHHSSMQHSSFESSADINTVFSSESAFETASDYIVSTPSSISHSTMVPQSSVSALSVVSESLASAEPSFVVPSESFIFSASSAAPQPSSSTYSVSFTTQFETPSSAGPSLVTSVESNTELISSATQSSDIQTEFTSTWTTTNSDGSVVTESGIISQSGTSLTTLTTFQPATSLVVPPYSVIETEFTSTWTTTNSDSSVATESGVVSQSDTLLTTVTTFPPAPSAIVPEFTSPWKINTSIESSETLTVSASSYETVGESLAAATSSYLSSATVVVAPSESEINTSSSILNNEEIASAPVSDTTSIAEHHDGSLSMTTTEFVNSNSLPSSHSIVTATITSCNKSKCSESVVTYVSSVSCATITVGDSEKNSSIVGNNISSIVGDDVSNTQAITMATSTESATTLTSVSGAKPSVANDATNSVHTTDYTTATTGVQNGSSLSIPSDIPIEISDITPTDSSSSAVTISYENGSNKESIENIKYLTLVVFGLMMFM</sequence>
<organism>
    <name type="scientific">Candida albicans (strain SC5314 / ATCC MYA-2876)</name>
    <name type="common">Yeast</name>
    <dbReference type="NCBI Taxonomy" id="237561"/>
    <lineage>
        <taxon>Eukaryota</taxon>
        <taxon>Fungi</taxon>
        <taxon>Dikarya</taxon>
        <taxon>Ascomycota</taxon>
        <taxon>Saccharomycotina</taxon>
        <taxon>Pichiomycetes</taxon>
        <taxon>Debaryomycetaceae</taxon>
        <taxon>Candida/Lodderomyces clade</taxon>
        <taxon>Candida</taxon>
    </lineage>
</organism>
<gene>
    <name type="primary">IFF3</name>
    <name type="ordered locus">CAALFM_CR03630WA</name>
    <name type="ORF">CaO19.11839</name>
    <name type="ORF">CaO19.4361</name>
</gene>
<comment type="function">
    <text evidence="1">GPI-anchored cell wall protein involved in cell wall organization, hyphal growth, as well as in host-fungal interaction and virulence.</text>
</comment>
<comment type="subcellular location">
    <subcellularLocation>
        <location evidence="4">Secreted</location>
        <location evidence="4">Cell wall</location>
    </subcellularLocation>
    <subcellularLocation>
        <location evidence="5">Membrane</location>
        <topology evidence="5">Lipid-anchor</topology>
        <topology evidence="5">GPI-anchor</topology>
    </subcellularLocation>
</comment>
<comment type="PTM">
    <text>The GPI-anchor is attached to the protein in the endoplasmic reticulum and serves to target the protein to the cell surface. There, the glucosamine-inositol phospholipid moiety is cleaved off and the GPI-modified mannoprotein is covalently attached via its lipidless GPI glycan remnant to the 1,6-beta-glucan of the outer cell wall layer.</text>
</comment>
<comment type="similarity">
    <text evidence="5">Belongs to the HYR1/IFF family.</text>
</comment>
<reference key="1">
    <citation type="journal article" date="2004" name="Proc. Natl. Acad. Sci. U.S.A.">
        <title>The diploid genome sequence of Candida albicans.</title>
        <authorList>
            <person name="Jones T."/>
            <person name="Federspiel N.A."/>
            <person name="Chibana H."/>
            <person name="Dungan J."/>
            <person name="Kalman S."/>
            <person name="Magee B.B."/>
            <person name="Newport G."/>
            <person name="Thorstenson Y.R."/>
            <person name="Agabian N."/>
            <person name="Magee P.T."/>
            <person name="Davis R.W."/>
            <person name="Scherer S."/>
        </authorList>
    </citation>
    <scope>NUCLEOTIDE SEQUENCE [LARGE SCALE GENOMIC DNA]</scope>
    <source>
        <strain>SC5314 / ATCC MYA-2876</strain>
    </source>
</reference>
<reference key="2">
    <citation type="journal article" date="2007" name="Genome Biol.">
        <title>Assembly of the Candida albicans genome into sixteen supercontigs aligned on the eight chromosomes.</title>
        <authorList>
            <person name="van het Hoog M."/>
            <person name="Rast T.J."/>
            <person name="Martchenko M."/>
            <person name="Grindle S."/>
            <person name="Dignard D."/>
            <person name="Hogues H."/>
            <person name="Cuomo C."/>
            <person name="Berriman M."/>
            <person name="Scherer S."/>
            <person name="Magee B.B."/>
            <person name="Whiteway M."/>
            <person name="Chibana H."/>
            <person name="Nantel A."/>
            <person name="Magee P.T."/>
        </authorList>
    </citation>
    <scope>GENOME REANNOTATION</scope>
    <source>
        <strain>SC5314 / ATCC MYA-2876</strain>
    </source>
</reference>
<reference key="3">
    <citation type="journal article" date="2013" name="Genome Biol.">
        <title>Assembly of a phased diploid Candida albicans genome facilitates allele-specific measurements and provides a simple model for repeat and indel structure.</title>
        <authorList>
            <person name="Muzzey D."/>
            <person name="Schwartz K."/>
            <person name="Weissman J.S."/>
            <person name="Sherlock G."/>
        </authorList>
    </citation>
    <scope>NUCLEOTIDE SEQUENCE [LARGE SCALE GENOMIC DNA]</scope>
    <scope>GENOME REANNOTATION</scope>
    <source>
        <strain>SC5314 / ATCC MYA-2876</strain>
    </source>
</reference>
<reference key="4">
    <citation type="journal article" date="2003" name="Yeast">
        <title>Genome-wide identification of fungal GPI proteins.</title>
        <authorList>
            <person name="De Groot P.W."/>
            <person name="Hellingwerf K.J."/>
            <person name="Klis F.M."/>
        </authorList>
    </citation>
    <scope>PREDICTION OF GPI-ANCHOR</scope>
</reference>
<reference key="5">
    <citation type="journal article" date="2007" name="Infect. Immun.">
        <title>Candida albicans Iff11, a secreted protein required for cell wall structure and virulence.</title>
        <authorList>
            <person name="Bates S."/>
            <person name="de la Rosa J.M."/>
            <person name="MacCallum D.M."/>
            <person name="Brown A.J."/>
            <person name="Gow N.A."/>
            <person name="Odds F.C."/>
        </authorList>
    </citation>
    <scope>IDENTIFICATION IN THE HYR1/IFF FAMILY</scope>
</reference>
<reference key="6">
    <citation type="journal article" date="2011" name="Eukaryot. Cell">
        <title>Unexpected role for a serine/threonine-rich domain in the Candida albicans Iff protein family.</title>
        <authorList>
            <person name="Boisrame A."/>
            <person name="Cornu A."/>
            <person name="Da Costa G."/>
            <person name="Richard M.L."/>
        </authorList>
    </citation>
    <scope>SUBCELLULAR LOCATION</scope>
</reference>
<dbReference type="EMBL" id="CP017630">
    <property type="protein sequence ID" value="AOW31101.1"/>
    <property type="molecule type" value="Genomic_DNA"/>
</dbReference>
<dbReference type="RefSeq" id="XP_715137.2">
    <property type="nucleotide sequence ID" value="XM_710044.2"/>
</dbReference>
<dbReference type="SMR" id="Q5A029"/>
<dbReference type="STRING" id="237561.Q5A029"/>
<dbReference type="GlyCosmos" id="Q5A029">
    <property type="glycosylation" value="9 sites, No reported glycans"/>
</dbReference>
<dbReference type="EnsemblFungi" id="CR_03630W_A-T">
    <property type="protein sequence ID" value="CR_03630W_A-T-p1"/>
    <property type="gene ID" value="CR_03630W_A"/>
</dbReference>
<dbReference type="GeneID" id="3643189"/>
<dbReference type="KEGG" id="cal:CAALFM_CR03630WA"/>
<dbReference type="CGD" id="CAL0000187251">
    <property type="gene designation" value="IFF3"/>
</dbReference>
<dbReference type="VEuPathDB" id="FungiDB:CR_03630W_A"/>
<dbReference type="HOGENOM" id="CLU_006199_1_0_1"/>
<dbReference type="InParanoid" id="Q5A029"/>
<dbReference type="OrthoDB" id="4022214at2759"/>
<dbReference type="PRO" id="PR:Q5A029"/>
<dbReference type="Proteomes" id="UP000000559">
    <property type="component" value="Chromosome R"/>
</dbReference>
<dbReference type="GO" id="GO:0009986">
    <property type="term" value="C:cell surface"/>
    <property type="evidence" value="ECO:0000314"/>
    <property type="project" value="CGD"/>
</dbReference>
<dbReference type="GO" id="GO:0005576">
    <property type="term" value="C:extracellular region"/>
    <property type="evidence" value="ECO:0007669"/>
    <property type="project" value="UniProtKB-KW"/>
</dbReference>
<dbReference type="GO" id="GO:0009277">
    <property type="term" value="C:fungal-type cell wall"/>
    <property type="evidence" value="ECO:0000314"/>
    <property type="project" value="CGD"/>
</dbReference>
<dbReference type="GO" id="GO:0098552">
    <property type="term" value="C:side of membrane"/>
    <property type="evidence" value="ECO:0007669"/>
    <property type="project" value="UniProtKB-KW"/>
</dbReference>
<dbReference type="InterPro" id="IPR031573">
    <property type="entry name" value="Cell_wall_rpt"/>
</dbReference>
<dbReference type="InterPro" id="IPR021031">
    <property type="entry name" value="Hyphal-reg_cell_wall_N"/>
</dbReference>
<dbReference type="Pfam" id="PF11765">
    <property type="entry name" value="Hyphal_reg_CWP"/>
    <property type="match status" value="1"/>
</dbReference>
<dbReference type="Pfam" id="PF15789">
    <property type="entry name" value="Hyr1"/>
    <property type="match status" value="3"/>
</dbReference>
<proteinExistence type="evidence at protein level"/>
<protein>
    <recommendedName>
        <fullName>Cell wall protein IFF3</fullName>
    </recommendedName>
    <alternativeName>
        <fullName>Adhesin-like protein IFF3</fullName>
    </alternativeName>
</protein>
<evidence type="ECO:0000250" key="1"/>
<evidence type="ECO:0000255" key="2"/>
<evidence type="ECO:0000255" key="3">
    <source>
        <dbReference type="PROSITE-ProRule" id="PRU00498"/>
    </source>
</evidence>
<evidence type="ECO:0000269" key="4">
    <source>
    </source>
</evidence>
<evidence type="ECO:0000305" key="5"/>
<feature type="signal peptide" evidence="2">
    <location>
        <begin position="1"/>
        <end position="20"/>
    </location>
</feature>
<feature type="chain" id="PRO_0000424758" description="Cell wall protein IFF3">
    <location>
        <begin position="21"/>
        <end position="917"/>
    </location>
</feature>
<feature type="propeptide" id="PRO_0000424759" description="Removed in mature form" evidence="2">
    <location>
        <begin position="918"/>
        <end position="941"/>
    </location>
</feature>
<feature type="lipid moiety-binding region" description="GPI-anchor amidated asparagine" evidence="2">
    <location>
        <position position="917"/>
    </location>
</feature>
<feature type="glycosylation site" description="N-linked (GlcNAc...) asparagine" evidence="3">
    <location>
        <position position="36"/>
    </location>
</feature>
<feature type="glycosylation site" description="N-linked (GlcNAc...) asparagine" evidence="3">
    <location>
        <position position="367"/>
    </location>
</feature>
<feature type="glycosylation site" description="N-linked (GlcNAc...) asparagine" evidence="3">
    <location>
        <position position="686"/>
    </location>
</feature>
<feature type="glycosylation site" description="N-linked (GlcNAc...) asparagine" evidence="3">
    <location>
        <position position="732"/>
    </location>
</feature>
<feature type="glycosylation site" description="N-linked (GlcNAc...) asparagine" evidence="3">
    <location>
        <position position="790"/>
    </location>
</feature>
<feature type="glycosylation site" description="N-linked (GlcNAc...) asparagine" evidence="3">
    <location>
        <position position="818"/>
    </location>
</feature>
<feature type="glycosylation site" description="N-linked (GlcNAc...) asparagine" evidence="3">
    <location>
        <position position="825"/>
    </location>
</feature>
<feature type="glycosylation site" description="N-linked (GlcNAc...) asparagine" evidence="3">
    <location>
        <position position="884"/>
    </location>
</feature>
<feature type="glycosylation site" description="N-linked (GlcNAc...) asparagine" evidence="3">
    <location>
        <position position="917"/>
    </location>
</feature>
<accession>Q5A029</accession>
<accession>A0A1D8PSJ2</accession>
<name>IFF3_CANAL</name>